<sequence>MESLTLQPIARVDGTINLPGSKSVSNRALLLAALAHGKTVLTNLLDSDDVRHMLNALTALGVSYTLSADRTRCEIIGNGGPLHAEGALELFLGNAGTAMRPLAAALCLGSNDIVLTGEPRMKERPIGHLVDALRLGGAKITYLEQENYPPLRLQGGFTGGNVDVDGSVSSQFLTALLMTAPLAPEDTVIRIKGDLVSKPYIDITLNLMKTFGVEIENQHYQQFVVKGGQSYQSPGTYLVEGDASSASYFLAAAAIKGGTVKVTGIGRNSMQGDIRFADVLEKMGATICWGDDYISCTRGELNAIDMDMNHIPDAAMTIATAALFAKGTTTLRNIYNWRVKETDRLFAMATELRKVGAEVEEGHDYIRITPPEKLNFAEIATYNDHRMAMCFSLVALSDTPVTILDPKCTAKTFPDYFEQLARISQAA</sequence>
<proteinExistence type="inferred from homology"/>
<accession>B6I8Y0</accession>
<evidence type="ECO:0000255" key="1">
    <source>
        <dbReference type="HAMAP-Rule" id="MF_00210"/>
    </source>
</evidence>
<organism>
    <name type="scientific">Escherichia coli (strain SE11)</name>
    <dbReference type="NCBI Taxonomy" id="409438"/>
    <lineage>
        <taxon>Bacteria</taxon>
        <taxon>Pseudomonadati</taxon>
        <taxon>Pseudomonadota</taxon>
        <taxon>Gammaproteobacteria</taxon>
        <taxon>Enterobacterales</taxon>
        <taxon>Enterobacteriaceae</taxon>
        <taxon>Escherichia</taxon>
    </lineage>
</organism>
<dbReference type="EC" id="2.5.1.19" evidence="1"/>
<dbReference type="EMBL" id="AP009240">
    <property type="protein sequence ID" value="BAG76491.1"/>
    <property type="molecule type" value="Genomic_DNA"/>
</dbReference>
<dbReference type="RefSeq" id="WP_000445231.1">
    <property type="nucleotide sequence ID" value="NC_011415.1"/>
</dbReference>
<dbReference type="SMR" id="B6I8Y0"/>
<dbReference type="GeneID" id="93776510"/>
<dbReference type="KEGG" id="ecy:ECSE_0967"/>
<dbReference type="HOGENOM" id="CLU_024321_0_0_6"/>
<dbReference type="UniPathway" id="UPA00053">
    <property type="reaction ID" value="UER00089"/>
</dbReference>
<dbReference type="Proteomes" id="UP000008199">
    <property type="component" value="Chromosome"/>
</dbReference>
<dbReference type="GO" id="GO:0005737">
    <property type="term" value="C:cytoplasm"/>
    <property type="evidence" value="ECO:0007669"/>
    <property type="project" value="UniProtKB-SubCell"/>
</dbReference>
<dbReference type="GO" id="GO:0003866">
    <property type="term" value="F:3-phosphoshikimate 1-carboxyvinyltransferase activity"/>
    <property type="evidence" value="ECO:0007669"/>
    <property type="project" value="UniProtKB-UniRule"/>
</dbReference>
<dbReference type="GO" id="GO:0008652">
    <property type="term" value="P:amino acid biosynthetic process"/>
    <property type="evidence" value="ECO:0007669"/>
    <property type="project" value="UniProtKB-KW"/>
</dbReference>
<dbReference type="GO" id="GO:0009073">
    <property type="term" value="P:aromatic amino acid family biosynthetic process"/>
    <property type="evidence" value="ECO:0007669"/>
    <property type="project" value="UniProtKB-KW"/>
</dbReference>
<dbReference type="GO" id="GO:0009423">
    <property type="term" value="P:chorismate biosynthetic process"/>
    <property type="evidence" value="ECO:0007669"/>
    <property type="project" value="UniProtKB-UniRule"/>
</dbReference>
<dbReference type="CDD" id="cd01554">
    <property type="entry name" value="EPT-like"/>
    <property type="match status" value="1"/>
</dbReference>
<dbReference type="FunFam" id="3.65.10.10:FF:000003">
    <property type="entry name" value="3-phosphoshikimate 1-carboxyvinyltransferase"/>
    <property type="match status" value="1"/>
</dbReference>
<dbReference type="FunFam" id="3.65.10.10:FF:000004">
    <property type="entry name" value="3-phosphoshikimate 1-carboxyvinyltransferase"/>
    <property type="match status" value="1"/>
</dbReference>
<dbReference type="Gene3D" id="3.65.10.10">
    <property type="entry name" value="Enolpyruvate transferase domain"/>
    <property type="match status" value="2"/>
</dbReference>
<dbReference type="HAMAP" id="MF_00210">
    <property type="entry name" value="EPSP_synth"/>
    <property type="match status" value="1"/>
</dbReference>
<dbReference type="InterPro" id="IPR001986">
    <property type="entry name" value="Enolpyruvate_Tfrase_dom"/>
</dbReference>
<dbReference type="InterPro" id="IPR036968">
    <property type="entry name" value="Enolpyruvate_Tfrase_sf"/>
</dbReference>
<dbReference type="InterPro" id="IPR006264">
    <property type="entry name" value="EPSP_synthase"/>
</dbReference>
<dbReference type="InterPro" id="IPR023193">
    <property type="entry name" value="EPSP_synthase_CS"/>
</dbReference>
<dbReference type="InterPro" id="IPR013792">
    <property type="entry name" value="RNA3'P_cycl/enolpyr_Trfase_a/b"/>
</dbReference>
<dbReference type="NCBIfam" id="TIGR01356">
    <property type="entry name" value="aroA"/>
    <property type="match status" value="1"/>
</dbReference>
<dbReference type="PANTHER" id="PTHR21090">
    <property type="entry name" value="AROM/DEHYDROQUINATE SYNTHASE"/>
    <property type="match status" value="1"/>
</dbReference>
<dbReference type="PANTHER" id="PTHR21090:SF5">
    <property type="entry name" value="PENTAFUNCTIONAL AROM POLYPEPTIDE"/>
    <property type="match status" value="1"/>
</dbReference>
<dbReference type="Pfam" id="PF00275">
    <property type="entry name" value="EPSP_synthase"/>
    <property type="match status" value="1"/>
</dbReference>
<dbReference type="PIRSF" id="PIRSF000505">
    <property type="entry name" value="EPSPS"/>
    <property type="match status" value="1"/>
</dbReference>
<dbReference type="SUPFAM" id="SSF55205">
    <property type="entry name" value="EPT/RTPC-like"/>
    <property type="match status" value="1"/>
</dbReference>
<dbReference type="PROSITE" id="PS00104">
    <property type="entry name" value="EPSP_SYNTHASE_1"/>
    <property type="match status" value="1"/>
</dbReference>
<dbReference type="PROSITE" id="PS00885">
    <property type="entry name" value="EPSP_SYNTHASE_2"/>
    <property type="match status" value="1"/>
</dbReference>
<keyword id="KW-0028">Amino-acid biosynthesis</keyword>
<keyword id="KW-0057">Aromatic amino acid biosynthesis</keyword>
<keyword id="KW-0963">Cytoplasm</keyword>
<keyword id="KW-0808">Transferase</keyword>
<name>AROA_ECOSE</name>
<reference key="1">
    <citation type="journal article" date="2008" name="DNA Res.">
        <title>Complete genome sequence and comparative analysis of the wild-type commensal Escherichia coli strain SE11 isolated from a healthy adult.</title>
        <authorList>
            <person name="Oshima K."/>
            <person name="Toh H."/>
            <person name="Ogura Y."/>
            <person name="Sasamoto H."/>
            <person name="Morita H."/>
            <person name="Park S.-H."/>
            <person name="Ooka T."/>
            <person name="Iyoda S."/>
            <person name="Taylor T.D."/>
            <person name="Hayashi T."/>
            <person name="Itoh K."/>
            <person name="Hattori M."/>
        </authorList>
    </citation>
    <scope>NUCLEOTIDE SEQUENCE [LARGE SCALE GENOMIC DNA]</scope>
    <source>
        <strain>SE11</strain>
    </source>
</reference>
<feature type="chain" id="PRO_1000099701" description="3-phosphoshikimate 1-carboxyvinyltransferase">
    <location>
        <begin position="1"/>
        <end position="427"/>
    </location>
</feature>
<feature type="active site" description="Proton acceptor" evidence="1">
    <location>
        <position position="313"/>
    </location>
</feature>
<feature type="binding site" evidence="1">
    <location>
        <position position="22"/>
    </location>
    <ligand>
        <name>3-phosphoshikimate</name>
        <dbReference type="ChEBI" id="CHEBI:145989"/>
    </ligand>
</feature>
<feature type="binding site" evidence="1">
    <location>
        <position position="22"/>
    </location>
    <ligand>
        <name>phosphoenolpyruvate</name>
        <dbReference type="ChEBI" id="CHEBI:58702"/>
    </ligand>
</feature>
<feature type="binding site" evidence="1">
    <location>
        <position position="23"/>
    </location>
    <ligand>
        <name>3-phosphoshikimate</name>
        <dbReference type="ChEBI" id="CHEBI:145989"/>
    </ligand>
</feature>
<feature type="binding site" evidence="1">
    <location>
        <position position="27"/>
    </location>
    <ligand>
        <name>3-phosphoshikimate</name>
        <dbReference type="ChEBI" id="CHEBI:145989"/>
    </ligand>
</feature>
<feature type="binding site" evidence="1">
    <location>
        <position position="96"/>
    </location>
    <ligand>
        <name>phosphoenolpyruvate</name>
        <dbReference type="ChEBI" id="CHEBI:58702"/>
    </ligand>
</feature>
<feature type="binding site" evidence="1">
    <location>
        <position position="124"/>
    </location>
    <ligand>
        <name>phosphoenolpyruvate</name>
        <dbReference type="ChEBI" id="CHEBI:58702"/>
    </ligand>
</feature>
<feature type="binding site" evidence="1">
    <location>
        <position position="169"/>
    </location>
    <ligand>
        <name>3-phosphoshikimate</name>
        <dbReference type="ChEBI" id="CHEBI:145989"/>
    </ligand>
</feature>
<feature type="binding site" evidence="1">
    <location>
        <position position="170"/>
    </location>
    <ligand>
        <name>3-phosphoshikimate</name>
        <dbReference type="ChEBI" id="CHEBI:145989"/>
    </ligand>
</feature>
<feature type="binding site" evidence="1">
    <location>
        <position position="171"/>
    </location>
    <ligand>
        <name>3-phosphoshikimate</name>
        <dbReference type="ChEBI" id="CHEBI:145989"/>
    </ligand>
</feature>
<feature type="binding site" evidence="1">
    <location>
        <position position="171"/>
    </location>
    <ligand>
        <name>phosphoenolpyruvate</name>
        <dbReference type="ChEBI" id="CHEBI:58702"/>
    </ligand>
</feature>
<feature type="binding site" evidence="1">
    <location>
        <position position="197"/>
    </location>
    <ligand>
        <name>3-phosphoshikimate</name>
        <dbReference type="ChEBI" id="CHEBI:145989"/>
    </ligand>
</feature>
<feature type="binding site" evidence="1">
    <location>
        <position position="313"/>
    </location>
    <ligand>
        <name>3-phosphoshikimate</name>
        <dbReference type="ChEBI" id="CHEBI:145989"/>
    </ligand>
</feature>
<feature type="binding site" evidence="1">
    <location>
        <position position="336"/>
    </location>
    <ligand>
        <name>3-phosphoshikimate</name>
        <dbReference type="ChEBI" id="CHEBI:145989"/>
    </ligand>
</feature>
<feature type="binding site" evidence="1">
    <location>
        <position position="340"/>
    </location>
    <ligand>
        <name>3-phosphoshikimate</name>
        <dbReference type="ChEBI" id="CHEBI:145989"/>
    </ligand>
</feature>
<feature type="binding site" evidence="1">
    <location>
        <position position="344"/>
    </location>
    <ligand>
        <name>phosphoenolpyruvate</name>
        <dbReference type="ChEBI" id="CHEBI:58702"/>
    </ligand>
</feature>
<feature type="binding site" evidence="1">
    <location>
        <position position="386"/>
    </location>
    <ligand>
        <name>phosphoenolpyruvate</name>
        <dbReference type="ChEBI" id="CHEBI:58702"/>
    </ligand>
</feature>
<feature type="binding site" evidence="1">
    <location>
        <position position="411"/>
    </location>
    <ligand>
        <name>phosphoenolpyruvate</name>
        <dbReference type="ChEBI" id="CHEBI:58702"/>
    </ligand>
</feature>
<comment type="function">
    <text evidence="1">Catalyzes the transfer of the enolpyruvyl moiety of phosphoenolpyruvate (PEP) to the 5-hydroxyl of shikimate-3-phosphate (S3P) to produce enolpyruvyl shikimate-3-phosphate and inorganic phosphate.</text>
</comment>
<comment type="catalytic activity">
    <reaction evidence="1">
        <text>3-phosphoshikimate + phosphoenolpyruvate = 5-O-(1-carboxyvinyl)-3-phosphoshikimate + phosphate</text>
        <dbReference type="Rhea" id="RHEA:21256"/>
        <dbReference type="ChEBI" id="CHEBI:43474"/>
        <dbReference type="ChEBI" id="CHEBI:57701"/>
        <dbReference type="ChEBI" id="CHEBI:58702"/>
        <dbReference type="ChEBI" id="CHEBI:145989"/>
        <dbReference type="EC" id="2.5.1.19"/>
    </reaction>
    <physiologicalReaction direction="left-to-right" evidence="1">
        <dbReference type="Rhea" id="RHEA:21257"/>
    </physiologicalReaction>
</comment>
<comment type="pathway">
    <text evidence="1">Metabolic intermediate biosynthesis; chorismate biosynthesis; chorismate from D-erythrose 4-phosphate and phosphoenolpyruvate: step 6/7.</text>
</comment>
<comment type="subunit">
    <text evidence="1">Monomer.</text>
</comment>
<comment type="subcellular location">
    <subcellularLocation>
        <location evidence="1">Cytoplasm</location>
    </subcellularLocation>
</comment>
<comment type="similarity">
    <text evidence="1">Belongs to the EPSP synthase family.</text>
</comment>
<protein>
    <recommendedName>
        <fullName evidence="1">3-phosphoshikimate 1-carboxyvinyltransferase</fullName>
        <ecNumber evidence="1">2.5.1.19</ecNumber>
    </recommendedName>
    <alternativeName>
        <fullName evidence="1">5-enolpyruvylshikimate-3-phosphate synthase</fullName>
        <shortName evidence="1">EPSP synthase</shortName>
        <shortName evidence="1">EPSPS</shortName>
    </alternativeName>
</protein>
<gene>
    <name evidence="1" type="primary">aroA</name>
    <name type="ordered locus">ECSE_0967</name>
</gene>